<name>COX2_PANTR</name>
<proteinExistence type="inferred from homology"/>
<evidence type="ECO:0000250" key="1">
    <source>
        <dbReference type="UniProtKB" id="P00403"/>
    </source>
</evidence>
<evidence type="ECO:0000250" key="2">
    <source>
        <dbReference type="UniProtKB" id="P00410"/>
    </source>
</evidence>
<evidence type="ECO:0000250" key="3">
    <source>
        <dbReference type="UniProtKB" id="P68530"/>
    </source>
</evidence>
<evidence type="ECO:0000305" key="4"/>
<comment type="function">
    <text evidence="2">Component of the cytochrome c oxidase, the last enzyme in the mitochondrial electron transport chain which drives oxidative phosphorylation. The respiratory chain contains 3 multisubunit complexes succinate dehydrogenase (complex II, CII), ubiquinol-cytochrome c oxidoreductase (cytochrome b-c1 complex, complex III, CIII) and cytochrome c oxidase (complex IV, CIV), that cooperate to transfer electrons derived from NADH and succinate to molecular oxygen, creating an electrochemical gradient over the inner membrane that drives transmembrane transport and the ATP synthase. Cytochrome c oxidase is the component of the respiratory chain that catalyzes the reduction of oxygen to water. Electrons originating from reduced cytochrome c in the intermembrane space (IMS) are transferred via the dinuclear copper A center (CU(A)) of subunit 2 and heme A of subunit 1 to the active site in subunit 1, a binuclear center (BNC) formed by heme A3 and copper B (CU(B)). The BNC reduces molecular oxygen to 2 water molecules using 4 electrons from cytochrome c in the IMS and 4 protons from the mitochondrial matrix.</text>
</comment>
<comment type="catalytic activity">
    <reaction evidence="2">
        <text>4 Fe(II)-[cytochrome c] + O2 + 8 H(+)(in) = 4 Fe(III)-[cytochrome c] + 2 H2O + 4 H(+)(out)</text>
        <dbReference type="Rhea" id="RHEA:11436"/>
        <dbReference type="Rhea" id="RHEA-COMP:10350"/>
        <dbReference type="Rhea" id="RHEA-COMP:14399"/>
        <dbReference type="ChEBI" id="CHEBI:15377"/>
        <dbReference type="ChEBI" id="CHEBI:15378"/>
        <dbReference type="ChEBI" id="CHEBI:15379"/>
        <dbReference type="ChEBI" id="CHEBI:29033"/>
        <dbReference type="ChEBI" id="CHEBI:29034"/>
        <dbReference type="EC" id="7.1.1.9"/>
    </reaction>
    <physiologicalReaction direction="left-to-right" evidence="2">
        <dbReference type="Rhea" id="RHEA:11437"/>
    </physiologicalReaction>
</comment>
<comment type="cofactor">
    <cofactor evidence="3">
        <name>Cu cation</name>
        <dbReference type="ChEBI" id="CHEBI:23378"/>
    </cofactor>
    <text evidence="3">Binds a dinuclear copper A center per subunit.</text>
</comment>
<comment type="subunit">
    <text evidence="1 3">Component of the cytochrome c oxidase (complex IV, CIV), a multisubunit enzyme composed of 14 subunits. The complex is composed of a catalytic core of 3 subunits MT-CO1, MT-CO2 and MT-CO3, encoded in the mitochondrial DNA, and 11 supernumerary subunits COX4I, COX5A, COX5B, COX6A, COX6B, COX6C, COX7A, COX7B, COX7C, COX8 and NDUFA4, which are encoded in the nuclear genome. The complex exists as a monomer or a dimer and forms supercomplexes (SCs) in the inner mitochondrial membrane with NADH-ubiquinone oxidoreductase (complex I, CI) and ubiquinol-cytochrome c oxidoreductase (cytochrome b-c1 complex, complex III, CIII), resulting in different assemblies (supercomplex SCI(1)III(2)IV(1) and megacomplex MCI(2)III(2)IV(2)) (By similarity). Found in a complex with TMEM177, COA6, COX18, COX20, SCO1 and SCO2. Interacts with TMEM177 in a COX20-dependent manner. Interacts with COX20. Interacts with COX16 (By similarity).</text>
</comment>
<comment type="subcellular location">
    <subcellularLocation>
        <location evidence="3">Mitochondrion inner membrane</location>
        <topology evidence="3">Multi-pass membrane protein</topology>
    </subcellularLocation>
</comment>
<comment type="similarity">
    <text evidence="4">Belongs to the cytochrome c oxidase subunit 2 family.</text>
</comment>
<organism>
    <name type="scientific">Pan troglodytes</name>
    <name type="common">Chimpanzee</name>
    <dbReference type="NCBI Taxonomy" id="9598"/>
    <lineage>
        <taxon>Eukaryota</taxon>
        <taxon>Metazoa</taxon>
        <taxon>Chordata</taxon>
        <taxon>Craniata</taxon>
        <taxon>Vertebrata</taxon>
        <taxon>Euteleostomi</taxon>
        <taxon>Mammalia</taxon>
        <taxon>Eutheria</taxon>
        <taxon>Euarchontoglires</taxon>
        <taxon>Primates</taxon>
        <taxon>Haplorrhini</taxon>
        <taxon>Catarrhini</taxon>
        <taxon>Hominidae</taxon>
        <taxon>Pan</taxon>
    </lineage>
</organism>
<reference key="1">
    <citation type="journal article" date="1993" name="Mol. Biol. Evol.">
        <title>Mitochondrial COII sequences and modern human origins.</title>
        <authorList>
            <person name="Ruvolo M."/>
            <person name="Zehr S."/>
            <person name="von Dornum M."/>
            <person name="Pan D."/>
            <person name="Chang B."/>
            <person name="Lin J."/>
        </authorList>
    </citation>
    <scope>NUCLEOTIDE SEQUENCE [GENOMIC DNA]</scope>
    <source>
        <strain>Isolate PTR1</strain>
    </source>
</reference>
<reference key="2">
    <citation type="journal article" date="1994" name="Proc. Natl. Acad. Sci. U.S.A.">
        <title>Gene trees and hominoid phylogeny.</title>
        <authorList>
            <person name="Ruvolo M."/>
            <person name="Pan D."/>
            <person name="Zehr S."/>
            <person name="Goldberg T."/>
            <person name="Disotell T.R."/>
            <person name="von Dornum M."/>
        </authorList>
    </citation>
    <scope>NUCLEOTIDE SEQUENCE [GENOMIC DNA]</scope>
    <source>
        <tissue>Hair follicle</tissue>
        <tissue>Placenta</tissue>
    </source>
</reference>
<reference key="3">
    <citation type="journal article" date="1995" name="Proc. Natl. Acad. Sci. U.S.A.">
        <title>Recent African origin of modern humans revealed by complete sequences of hominoid mitochondrial DNAs.</title>
        <authorList>
            <person name="Horai S."/>
            <person name="Hayasaka K."/>
            <person name="Kondo R."/>
            <person name="Tsugane K."/>
            <person name="Takahata N."/>
        </authorList>
    </citation>
    <scope>NUCLEOTIDE SEQUENCE [GENOMIC DNA]</scope>
</reference>
<gene>
    <name type="primary">MT-CO2</name>
    <name type="synonym">COII</name>
    <name type="synonym">COX2</name>
    <name type="synonym">COXII</name>
    <name type="synonym">MTCO2</name>
</gene>
<feature type="chain" id="PRO_0000183648" description="Cytochrome c oxidase subunit 2">
    <location>
        <begin position="1"/>
        <end position="227"/>
    </location>
</feature>
<feature type="topological domain" description="Mitochondrial intermembrane" evidence="3">
    <location>
        <begin position="1"/>
        <end position="14"/>
    </location>
</feature>
<feature type="transmembrane region" description="Helical; Name=I" evidence="3">
    <location>
        <begin position="15"/>
        <end position="45"/>
    </location>
</feature>
<feature type="topological domain" description="Mitochondrial matrix" evidence="3">
    <location>
        <begin position="46"/>
        <end position="59"/>
    </location>
</feature>
<feature type="transmembrane region" description="Helical; Name=II" evidence="3">
    <location>
        <begin position="60"/>
        <end position="87"/>
    </location>
</feature>
<feature type="topological domain" description="Mitochondrial intermembrane" evidence="3">
    <location>
        <begin position="88"/>
        <end position="227"/>
    </location>
</feature>
<feature type="binding site" evidence="3">
    <location>
        <position position="161"/>
    </location>
    <ligand>
        <name>Cu cation</name>
        <dbReference type="ChEBI" id="CHEBI:23378"/>
        <label>A1</label>
    </ligand>
</feature>
<feature type="binding site" evidence="3">
    <location>
        <position position="196"/>
    </location>
    <ligand>
        <name>Cu cation</name>
        <dbReference type="ChEBI" id="CHEBI:23378"/>
        <label>A1</label>
    </ligand>
</feature>
<feature type="binding site" evidence="3">
    <location>
        <position position="196"/>
    </location>
    <ligand>
        <name>Cu cation</name>
        <dbReference type="ChEBI" id="CHEBI:23378"/>
        <label>A2</label>
    </ligand>
</feature>
<feature type="binding site" evidence="3">
    <location>
        <position position="198"/>
    </location>
    <ligand>
        <name>Cu cation</name>
        <dbReference type="ChEBI" id="CHEBI:23378"/>
        <label>A2</label>
    </ligand>
</feature>
<feature type="binding site" evidence="3">
    <location>
        <position position="198"/>
    </location>
    <ligand>
        <name>Mg(2+)</name>
        <dbReference type="ChEBI" id="CHEBI:18420"/>
        <note>ligand shared with MT-CO1</note>
    </ligand>
</feature>
<feature type="binding site" evidence="3">
    <location>
        <position position="200"/>
    </location>
    <ligand>
        <name>Cu cation</name>
        <dbReference type="ChEBI" id="CHEBI:23378"/>
        <label>A1</label>
    </ligand>
</feature>
<feature type="binding site" evidence="3">
    <location>
        <position position="200"/>
    </location>
    <ligand>
        <name>Cu cation</name>
        <dbReference type="ChEBI" id="CHEBI:23378"/>
        <label>A2</label>
    </ligand>
</feature>
<feature type="binding site" evidence="3">
    <location>
        <position position="204"/>
    </location>
    <ligand>
        <name>Cu cation</name>
        <dbReference type="ChEBI" id="CHEBI:23378"/>
        <label>A2</label>
    </ligand>
</feature>
<feature type="binding site" evidence="3">
    <location>
        <position position="207"/>
    </location>
    <ligand>
        <name>Cu cation</name>
        <dbReference type="ChEBI" id="CHEBI:23378"/>
        <label>A1</label>
    </ligand>
</feature>
<feature type="sequence conflict" description="In Ref. 1; AAA20850." evidence="4" ref="1">
    <original>F</original>
    <variation>L</variation>
    <location>
        <position position="225"/>
    </location>
</feature>
<dbReference type="EC" id="7.1.1.9"/>
<dbReference type="EMBL" id="U12697">
    <property type="protein sequence ID" value="AAA20850.1"/>
    <property type="molecule type" value="Genomic_DNA"/>
</dbReference>
<dbReference type="EMBL" id="U12705">
    <property type="protein sequence ID" value="AAA61414.1"/>
    <property type="molecule type" value="Genomic_DNA"/>
</dbReference>
<dbReference type="EMBL" id="U12706">
    <property type="protein sequence ID" value="AAA61415.1"/>
    <property type="molecule type" value="Genomic_DNA"/>
</dbReference>
<dbReference type="EMBL" id="D38113">
    <property type="protein sequence ID" value="BAA07299.1"/>
    <property type="molecule type" value="Genomic_DNA"/>
</dbReference>
<dbReference type="PIR" id="I61893">
    <property type="entry name" value="I61893"/>
</dbReference>
<dbReference type="PIR" id="T14146">
    <property type="entry name" value="T14146"/>
</dbReference>
<dbReference type="RefSeq" id="NP_008189.1">
    <property type="nucleotide sequence ID" value="NC_001643.1"/>
</dbReference>
<dbReference type="SMR" id="P50690"/>
<dbReference type="FunCoup" id="P50690">
    <property type="interactions" value="227"/>
</dbReference>
<dbReference type="STRING" id="9598.ENSPTRP00000061402"/>
<dbReference type="PaxDb" id="9598-ENSPTRP00000061402"/>
<dbReference type="Ensembl" id="ENSPTRT00000076397.1">
    <property type="protein sequence ID" value="ENSPTRP00000061402.1"/>
    <property type="gene ID" value="ENSPTRG00000042660.1"/>
</dbReference>
<dbReference type="GeneID" id="807864"/>
<dbReference type="KEGG" id="ptr:807864"/>
<dbReference type="CTD" id="4513"/>
<dbReference type="VGNC" id="VGNC:11715">
    <property type="gene designation" value="MT-CO2"/>
</dbReference>
<dbReference type="eggNOG" id="KOG4767">
    <property type="taxonomic scope" value="Eukaryota"/>
</dbReference>
<dbReference type="GeneTree" id="ENSGT00390000017410"/>
<dbReference type="HOGENOM" id="CLU_036876_2_3_1"/>
<dbReference type="InParanoid" id="P50690"/>
<dbReference type="OMA" id="WSYEYTD"/>
<dbReference type="Proteomes" id="UP000002277">
    <property type="component" value="Mitochondrion"/>
</dbReference>
<dbReference type="Bgee" id="ENSPTRG00000042660">
    <property type="expression patterns" value="Expressed in primary visual cortex and 21 other cell types or tissues"/>
</dbReference>
<dbReference type="GO" id="GO:0005743">
    <property type="term" value="C:mitochondrial inner membrane"/>
    <property type="evidence" value="ECO:0007669"/>
    <property type="project" value="UniProtKB-SubCell"/>
</dbReference>
<dbReference type="GO" id="GO:0045277">
    <property type="term" value="C:respiratory chain complex IV"/>
    <property type="evidence" value="ECO:0000250"/>
    <property type="project" value="UniProtKB"/>
</dbReference>
<dbReference type="GO" id="GO:0005507">
    <property type="term" value="F:copper ion binding"/>
    <property type="evidence" value="ECO:0007669"/>
    <property type="project" value="InterPro"/>
</dbReference>
<dbReference type="GO" id="GO:0004129">
    <property type="term" value="F:cytochrome-c oxidase activity"/>
    <property type="evidence" value="ECO:0007669"/>
    <property type="project" value="UniProtKB-EC"/>
</dbReference>
<dbReference type="GO" id="GO:0042773">
    <property type="term" value="P:ATP synthesis coupled electron transport"/>
    <property type="evidence" value="ECO:0000318"/>
    <property type="project" value="GO_Central"/>
</dbReference>
<dbReference type="CDD" id="cd13912">
    <property type="entry name" value="CcO_II_C"/>
    <property type="match status" value="1"/>
</dbReference>
<dbReference type="FunFam" id="1.10.287.90:FF:000001">
    <property type="entry name" value="Cytochrome c oxidase subunit 2"/>
    <property type="match status" value="1"/>
</dbReference>
<dbReference type="FunFam" id="2.60.40.420:FF:000001">
    <property type="entry name" value="Cytochrome c oxidase subunit 2"/>
    <property type="match status" value="1"/>
</dbReference>
<dbReference type="Gene3D" id="1.10.287.90">
    <property type="match status" value="1"/>
</dbReference>
<dbReference type="Gene3D" id="2.60.40.420">
    <property type="entry name" value="Cupredoxins - blue copper proteins"/>
    <property type="match status" value="1"/>
</dbReference>
<dbReference type="InterPro" id="IPR045187">
    <property type="entry name" value="CcO_II"/>
</dbReference>
<dbReference type="InterPro" id="IPR002429">
    <property type="entry name" value="CcO_II-like_C"/>
</dbReference>
<dbReference type="InterPro" id="IPR034210">
    <property type="entry name" value="CcO_II_C"/>
</dbReference>
<dbReference type="InterPro" id="IPR001505">
    <property type="entry name" value="Copper_CuA"/>
</dbReference>
<dbReference type="InterPro" id="IPR008972">
    <property type="entry name" value="Cupredoxin"/>
</dbReference>
<dbReference type="InterPro" id="IPR014222">
    <property type="entry name" value="Cyt_c_oxidase_su2"/>
</dbReference>
<dbReference type="InterPro" id="IPR011759">
    <property type="entry name" value="Cyt_c_oxidase_su2_TM_dom"/>
</dbReference>
<dbReference type="InterPro" id="IPR036257">
    <property type="entry name" value="Cyt_c_oxidase_su2_TM_sf"/>
</dbReference>
<dbReference type="NCBIfam" id="TIGR02866">
    <property type="entry name" value="CoxB"/>
    <property type="match status" value="1"/>
</dbReference>
<dbReference type="PANTHER" id="PTHR22888:SF9">
    <property type="entry name" value="CYTOCHROME C OXIDASE SUBUNIT 2"/>
    <property type="match status" value="1"/>
</dbReference>
<dbReference type="PANTHER" id="PTHR22888">
    <property type="entry name" value="CYTOCHROME C OXIDASE, SUBUNIT II"/>
    <property type="match status" value="1"/>
</dbReference>
<dbReference type="Pfam" id="PF00116">
    <property type="entry name" value="COX2"/>
    <property type="match status" value="1"/>
</dbReference>
<dbReference type="Pfam" id="PF02790">
    <property type="entry name" value="COX2_TM"/>
    <property type="match status" value="1"/>
</dbReference>
<dbReference type="PRINTS" id="PR01166">
    <property type="entry name" value="CYCOXIDASEII"/>
</dbReference>
<dbReference type="SUPFAM" id="SSF49503">
    <property type="entry name" value="Cupredoxins"/>
    <property type="match status" value="1"/>
</dbReference>
<dbReference type="SUPFAM" id="SSF81464">
    <property type="entry name" value="Cytochrome c oxidase subunit II-like, transmembrane region"/>
    <property type="match status" value="1"/>
</dbReference>
<dbReference type="PROSITE" id="PS00078">
    <property type="entry name" value="COX2"/>
    <property type="match status" value="1"/>
</dbReference>
<dbReference type="PROSITE" id="PS50857">
    <property type="entry name" value="COX2_CUA"/>
    <property type="match status" value="1"/>
</dbReference>
<dbReference type="PROSITE" id="PS50999">
    <property type="entry name" value="COX2_TM"/>
    <property type="match status" value="1"/>
</dbReference>
<geneLocation type="mitochondrion"/>
<protein>
    <recommendedName>
        <fullName>Cytochrome c oxidase subunit 2</fullName>
        <ecNumber>7.1.1.9</ecNumber>
    </recommendedName>
    <alternativeName>
        <fullName>Cytochrome c oxidase polypeptide II</fullName>
    </alternativeName>
</protein>
<accession>P50690</accession>
<accession>Q37759</accession>
<keyword id="KW-0186">Copper</keyword>
<keyword id="KW-0249">Electron transport</keyword>
<keyword id="KW-0460">Magnesium</keyword>
<keyword id="KW-0472">Membrane</keyword>
<keyword id="KW-0479">Metal-binding</keyword>
<keyword id="KW-0496">Mitochondrion</keyword>
<keyword id="KW-0999">Mitochondrion inner membrane</keyword>
<keyword id="KW-1185">Reference proteome</keyword>
<keyword id="KW-0679">Respiratory chain</keyword>
<keyword id="KW-1278">Translocase</keyword>
<keyword id="KW-0812">Transmembrane</keyword>
<keyword id="KW-1133">Transmembrane helix</keyword>
<keyword id="KW-0813">Transport</keyword>
<sequence length="227" mass="25556">MAHAAQVGLQDATSPIMEELIIFHDHALMIIFLICFLVLYALFLTLTTKLTNTSISDAQEMETVWTILPAIILVLIALPSLRILYMTDEVNDPSFTIKSIGHQWYWTYEYTDYGGLIFNSYMLPPLFLEPGDLRLLDVDNRVVLPVEAPVRMMITSQDVLHSWAVPTLGLKTDAIPGRLNQTTFTATRPGVYYGQCSEICGANHSFMPIVLELIPLKIFEMGPVFTL</sequence>